<name>RS15_XANCP</name>
<gene>
    <name evidence="1" type="primary">rpsO</name>
    <name type="ordered locus">XCC2508</name>
</gene>
<proteinExistence type="inferred from homology"/>
<reference key="1">
    <citation type="journal article" date="2002" name="Nature">
        <title>Comparison of the genomes of two Xanthomonas pathogens with differing host specificities.</title>
        <authorList>
            <person name="da Silva A.C.R."/>
            <person name="Ferro J.A."/>
            <person name="Reinach F.C."/>
            <person name="Farah C.S."/>
            <person name="Furlan L.R."/>
            <person name="Quaggio R.B."/>
            <person name="Monteiro-Vitorello C.B."/>
            <person name="Van Sluys M.A."/>
            <person name="Almeida N.F. Jr."/>
            <person name="Alves L.M.C."/>
            <person name="do Amaral A.M."/>
            <person name="Bertolini M.C."/>
            <person name="Camargo L.E.A."/>
            <person name="Camarotte G."/>
            <person name="Cannavan F."/>
            <person name="Cardozo J."/>
            <person name="Chambergo F."/>
            <person name="Ciapina L.P."/>
            <person name="Cicarelli R.M.B."/>
            <person name="Coutinho L.L."/>
            <person name="Cursino-Santos J.R."/>
            <person name="El-Dorry H."/>
            <person name="Faria J.B."/>
            <person name="Ferreira A.J.S."/>
            <person name="Ferreira R.C.C."/>
            <person name="Ferro M.I.T."/>
            <person name="Formighieri E.F."/>
            <person name="Franco M.C."/>
            <person name="Greggio C.C."/>
            <person name="Gruber A."/>
            <person name="Katsuyama A.M."/>
            <person name="Kishi L.T."/>
            <person name="Leite R.P."/>
            <person name="Lemos E.G.M."/>
            <person name="Lemos M.V.F."/>
            <person name="Locali E.C."/>
            <person name="Machado M.A."/>
            <person name="Madeira A.M.B.N."/>
            <person name="Martinez-Rossi N.M."/>
            <person name="Martins E.C."/>
            <person name="Meidanis J."/>
            <person name="Menck C.F.M."/>
            <person name="Miyaki C.Y."/>
            <person name="Moon D.H."/>
            <person name="Moreira L.M."/>
            <person name="Novo M.T.M."/>
            <person name="Okura V.K."/>
            <person name="Oliveira M.C."/>
            <person name="Oliveira V.R."/>
            <person name="Pereira H.A."/>
            <person name="Rossi A."/>
            <person name="Sena J.A.D."/>
            <person name="Silva C."/>
            <person name="de Souza R.F."/>
            <person name="Spinola L.A.F."/>
            <person name="Takita M.A."/>
            <person name="Tamura R.E."/>
            <person name="Teixeira E.C."/>
            <person name="Tezza R.I.D."/>
            <person name="Trindade dos Santos M."/>
            <person name="Truffi D."/>
            <person name="Tsai S.M."/>
            <person name="White F.F."/>
            <person name="Setubal J.C."/>
            <person name="Kitajima J.P."/>
        </authorList>
    </citation>
    <scope>NUCLEOTIDE SEQUENCE [LARGE SCALE GENOMIC DNA]</scope>
    <source>
        <strain>ATCC 33913 / DSM 3586 / NCPPB 528 / LMG 568 / P 25</strain>
    </source>
</reference>
<keyword id="KW-1185">Reference proteome</keyword>
<keyword id="KW-0687">Ribonucleoprotein</keyword>
<keyword id="KW-0689">Ribosomal protein</keyword>
<keyword id="KW-0694">RNA-binding</keyword>
<keyword id="KW-0699">rRNA-binding</keyword>
<feature type="chain" id="PRO_0000115591" description="Small ribosomal subunit protein uS15">
    <location>
        <begin position="1"/>
        <end position="86"/>
    </location>
</feature>
<feature type="region of interest" description="Disordered" evidence="2">
    <location>
        <begin position="1"/>
        <end position="22"/>
    </location>
</feature>
<feature type="compositionally biased region" description="Basic and acidic residues" evidence="2">
    <location>
        <begin position="7"/>
        <end position="16"/>
    </location>
</feature>
<protein>
    <recommendedName>
        <fullName evidence="1">Small ribosomal subunit protein uS15</fullName>
    </recommendedName>
    <alternativeName>
        <fullName evidence="3">30S ribosomal protein S15</fullName>
    </alternativeName>
</protein>
<comment type="function">
    <text evidence="1">One of the primary rRNA binding proteins, it binds directly to 16S rRNA where it helps nucleate assembly of the platform of the 30S subunit by binding and bridging several RNA helices of the 16S rRNA.</text>
</comment>
<comment type="function">
    <text evidence="1">Forms an intersubunit bridge (bridge B4) with the 23S rRNA of the 50S subunit in the ribosome.</text>
</comment>
<comment type="subunit">
    <text evidence="1">Part of the 30S ribosomal subunit. Forms a bridge to the 50S subunit in the 70S ribosome, contacting the 23S rRNA.</text>
</comment>
<comment type="similarity">
    <text evidence="1">Belongs to the universal ribosomal protein uS15 family.</text>
</comment>
<evidence type="ECO:0000255" key="1">
    <source>
        <dbReference type="HAMAP-Rule" id="MF_01343"/>
    </source>
</evidence>
<evidence type="ECO:0000256" key="2">
    <source>
        <dbReference type="SAM" id="MobiDB-lite"/>
    </source>
</evidence>
<evidence type="ECO:0000305" key="3"/>
<dbReference type="EMBL" id="AE008922">
    <property type="protein sequence ID" value="AAM41782.1"/>
    <property type="molecule type" value="Genomic_DNA"/>
</dbReference>
<dbReference type="RefSeq" id="NP_637858.1">
    <property type="nucleotide sequence ID" value="NC_003902.1"/>
</dbReference>
<dbReference type="RefSeq" id="WP_011037641.1">
    <property type="nucleotide sequence ID" value="NC_003902.1"/>
</dbReference>
<dbReference type="SMR" id="Q8P7V0"/>
<dbReference type="STRING" id="190485.XCC2508"/>
<dbReference type="EnsemblBacteria" id="AAM41782">
    <property type="protein sequence ID" value="AAM41782"/>
    <property type="gene ID" value="XCC2508"/>
</dbReference>
<dbReference type="GeneID" id="58012886"/>
<dbReference type="KEGG" id="xcc:XCC2508"/>
<dbReference type="PATRIC" id="fig|190485.4.peg.2675"/>
<dbReference type="eggNOG" id="COG0184">
    <property type="taxonomic scope" value="Bacteria"/>
</dbReference>
<dbReference type="HOGENOM" id="CLU_148518_1_0_6"/>
<dbReference type="OrthoDB" id="9799262at2"/>
<dbReference type="Proteomes" id="UP000001010">
    <property type="component" value="Chromosome"/>
</dbReference>
<dbReference type="GO" id="GO:0022627">
    <property type="term" value="C:cytosolic small ribosomal subunit"/>
    <property type="evidence" value="ECO:0000318"/>
    <property type="project" value="GO_Central"/>
</dbReference>
<dbReference type="GO" id="GO:0019843">
    <property type="term" value="F:rRNA binding"/>
    <property type="evidence" value="ECO:0007669"/>
    <property type="project" value="UniProtKB-UniRule"/>
</dbReference>
<dbReference type="GO" id="GO:0003735">
    <property type="term" value="F:structural constituent of ribosome"/>
    <property type="evidence" value="ECO:0007669"/>
    <property type="project" value="InterPro"/>
</dbReference>
<dbReference type="GO" id="GO:0006412">
    <property type="term" value="P:translation"/>
    <property type="evidence" value="ECO:0007669"/>
    <property type="project" value="UniProtKB-UniRule"/>
</dbReference>
<dbReference type="CDD" id="cd00353">
    <property type="entry name" value="Ribosomal_S15p_S13e"/>
    <property type="match status" value="1"/>
</dbReference>
<dbReference type="FunFam" id="1.10.287.10:FF:000002">
    <property type="entry name" value="30S ribosomal protein S15"/>
    <property type="match status" value="1"/>
</dbReference>
<dbReference type="Gene3D" id="6.10.250.3130">
    <property type="match status" value="1"/>
</dbReference>
<dbReference type="Gene3D" id="1.10.287.10">
    <property type="entry name" value="S15/NS1, RNA-binding"/>
    <property type="match status" value="1"/>
</dbReference>
<dbReference type="HAMAP" id="MF_01343_B">
    <property type="entry name" value="Ribosomal_uS15_B"/>
    <property type="match status" value="1"/>
</dbReference>
<dbReference type="InterPro" id="IPR000589">
    <property type="entry name" value="Ribosomal_uS15"/>
</dbReference>
<dbReference type="InterPro" id="IPR005290">
    <property type="entry name" value="Ribosomal_uS15_bac-type"/>
</dbReference>
<dbReference type="InterPro" id="IPR009068">
    <property type="entry name" value="uS15_NS1_RNA-bd_sf"/>
</dbReference>
<dbReference type="NCBIfam" id="TIGR00952">
    <property type="entry name" value="S15_bact"/>
    <property type="match status" value="1"/>
</dbReference>
<dbReference type="PANTHER" id="PTHR23321">
    <property type="entry name" value="RIBOSOMAL PROTEIN S15, BACTERIAL AND ORGANELLAR"/>
    <property type="match status" value="1"/>
</dbReference>
<dbReference type="PANTHER" id="PTHR23321:SF26">
    <property type="entry name" value="SMALL RIBOSOMAL SUBUNIT PROTEIN US15M"/>
    <property type="match status" value="1"/>
</dbReference>
<dbReference type="Pfam" id="PF00312">
    <property type="entry name" value="Ribosomal_S15"/>
    <property type="match status" value="1"/>
</dbReference>
<dbReference type="SMART" id="SM01387">
    <property type="entry name" value="Ribosomal_S15"/>
    <property type="match status" value="1"/>
</dbReference>
<dbReference type="SUPFAM" id="SSF47060">
    <property type="entry name" value="S15/NS1 RNA-binding domain"/>
    <property type="match status" value="1"/>
</dbReference>
<dbReference type="PROSITE" id="PS00362">
    <property type="entry name" value="RIBOSOMAL_S15"/>
    <property type="match status" value="1"/>
</dbReference>
<accession>Q8P7V0</accession>
<organism>
    <name type="scientific">Xanthomonas campestris pv. campestris (strain ATCC 33913 / DSM 3586 / NCPPB 528 / LMG 568 / P 25)</name>
    <dbReference type="NCBI Taxonomy" id="190485"/>
    <lineage>
        <taxon>Bacteria</taxon>
        <taxon>Pseudomonadati</taxon>
        <taxon>Pseudomonadota</taxon>
        <taxon>Gammaproteobacteria</taxon>
        <taxon>Lysobacterales</taxon>
        <taxon>Lysobacteraceae</taxon>
        <taxon>Xanthomonas</taxon>
    </lineage>
</organism>
<sequence length="86" mass="10040">MSVDTQKVIEDNKRSAQDTGSPEVQVALLTARIELLTGHFKTHKKDHHSRRGLLQMVNRRRSLLDYLKKKDGERYKSLIEKLGLRR</sequence>